<reference key="1">
    <citation type="journal article" date="1997" name="J. Exp. Med.">
        <title>Secretory granule proteases in rat mast cells. Cloning of 10 different serine proteases and a carboxypeptidase A from various rat mast cell populations.</title>
        <authorList>
            <person name="Lutzelschwab C."/>
            <person name="Pejler G."/>
            <person name="Aveskogh M."/>
            <person name="Hellman L."/>
        </authorList>
    </citation>
    <scope>NUCLEOTIDE SEQUENCE [MRNA]</scope>
    <source>
        <strain>Sprague-Dawley</strain>
    </source>
</reference>
<reference key="2">
    <citation type="journal article" date="1991" name="Biochemistry">
        <title>Rat mast cell carboxypeptidase: amino acid sequence and evidence of enzyme activity within mast cell granules.</title>
        <authorList>
            <person name="Cole K.R."/>
            <person name="Kumar S."/>
            <person name="le Trong H."/>
            <person name="Woodbury R.G."/>
            <person name="Walsh K.A."/>
            <person name="Neurath H."/>
        </authorList>
    </citation>
    <scope>PROTEIN SEQUENCE OF 104-412</scope>
</reference>
<evidence type="ECO:0000250" key="1"/>
<evidence type="ECO:0000250" key="2">
    <source>
        <dbReference type="UniProtKB" id="P00730"/>
    </source>
</evidence>
<evidence type="ECO:0000255" key="3">
    <source>
        <dbReference type="PROSITE-ProRule" id="PRU01379"/>
    </source>
</evidence>
<evidence type="ECO:0000305" key="4"/>
<sequence>LMGVIYSTLAIAPVQFDREKVFRVKLQDEKQASILKNLTQTIELDFWYPDAIHDIAVNMTVDFRVTEKESQTIQSTLEQHKMDYEILINDLQEEIDKQFDVKEEIAGRHSYAKYNDWNKIVSWTEKMVEKHPEMVSRIKIGSTVEDNPLYVLKIGRKDGERKAIFMDCGIHAREWVSPAFCQWFVYQAAKSYGKNKIMTKLLDRMNFYVLPVFNVDGYIWSWTKDRMWRKNRSKNPNSTCIGTDLNRNFDVSWDSSPNTDNPCLSVYRGPAPESEKETKAVTNFIRSHLNSIKAYITFHSYSQMLLFPYGYTIKLPPNHQDLLKVARIATDVLSSRYETRYIYGPIASTIYKTSGSSLDWAYDLGIKHTFAFELRDKGKSGFLLPESRIKPTCKETMLSVKFIAKYILKHTS</sequence>
<feature type="signal peptide" evidence="1">
    <location>
        <begin position="1" status="less than"/>
        <end position="10"/>
    </location>
</feature>
<feature type="propeptide" id="PRO_0000004399" description="Activation peptide">
    <location>
        <begin position="11"/>
        <end position="104"/>
    </location>
</feature>
<feature type="chain" id="PRO_0000004400" description="Mast cell carboxypeptidase A">
    <location>
        <begin position="105"/>
        <end position="412"/>
    </location>
</feature>
<feature type="domain" description="Peptidase M14" evidence="3">
    <location>
        <begin position="113"/>
        <end position="407"/>
    </location>
</feature>
<feature type="active site" description="Proton donor/acceptor" evidence="3">
    <location>
        <position position="373"/>
    </location>
</feature>
<feature type="binding site" evidence="3">
    <location>
        <position position="171"/>
    </location>
    <ligand>
        <name>Zn(2+)</name>
        <dbReference type="ChEBI" id="CHEBI:29105"/>
        <note>catalytic</note>
    </ligand>
</feature>
<feature type="binding site" evidence="3">
    <location>
        <position position="174"/>
    </location>
    <ligand>
        <name>Zn(2+)</name>
        <dbReference type="ChEBI" id="CHEBI:29105"/>
        <note>catalytic</note>
    </ligand>
</feature>
<feature type="binding site" evidence="3">
    <location>
        <position position="299"/>
    </location>
    <ligand>
        <name>Zn(2+)</name>
        <dbReference type="ChEBI" id="CHEBI:29105"/>
        <note>catalytic</note>
    </ligand>
</feature>
<feature type="disulfide bond" evidence="1">
    <location>
        <begin position="168"/>
        <end position="181"/>
    </location>
</feature>
<feature type="disulfide bond" evidence="1">
    <location>
        <begin position="240"/>
        <end position="263"/>
    </location>
</feature>
<feature type="sequence conflict" description="In Ref. 2; AA sequence." evidence="4" ref="2">
    <original>K</original>
    <variation>N</variation>
    <location>
        <position position="196"/>
    </location>
</feature>
<feature type="sequence conflict" description="In Ref. 2; AA sequence." evidence="4" ref="2">
    <original>N</original>
    <variation>S</variation>
    <location>
        <position position="237"/>
    </location>
</feature>
<feature type="non-terminal residue">
    <location>
        <position position="1"/>
    </location>
</feature>
<dbReference type="EC" id="3.4.17.1"/>
<dbReference type="EMBL" id="U67914">
    <property type="protein sequence ID" value="AAB48267.1"/>
    <property type="molecule type" value="mRNA"/>
</dbReference>
<dbReference type="PIR" id="A38395">
    <property type="entry name" value="A38395"/>
</dbReference>
<dbReference type="RefSeq" id="NP_062173.1">
    <property type="nucleotide sequence ID" value="NM_019300.1"/>
</dbReference>
<dbReference type="SMR" id="P21961"/>
<dbReference type="FunCoup" id="P21961">
    <property type="interactions" value="112"/>
</dbReference>
<dbReference type="STRING" id="10116.ENSRNOP00000014970"/>
<dbReference type="BindingDB" id="P21961"/>
<dbReference type="ChEMBL" id="CHEMBL4523202"/>
<dbReference type="MEROPS" id="M14.010"/>
<dbReference type="PhosphoSitePlus" id="P21961"/>
<dbReference type="PaxDb" id="10116-ENSRNOP00000014970"/>
<dbReference type="GeneID" id="54242"/>
<dbReference type="KEGG" id="rno:54242"/>
<dbReference type="UCSC" id="RGD:2390">
    <property type="organism name" value="rat"/>
</dbReference>
<dbReference type="AGR" id="RGD:2390"/>
<dbReference type="CTD" id="1359"/>
<dbReference type="RGD" id="2390">
    <property type="gene designation" value="Cpa3"/>
</dbReference>
<dbReference type="eggNOG" id="KOG2650">
    <property type="taxonomic scope" value="Eukaryota"/>
</dbReference>
<dbReference type="InParanoid" id="P21961"/>
<dbReference type="OrthoDB" id="3626597at2759"/>
<dbReference type="PhylomeDB" id="P21961"/>
<dbReference type="Reactome" id="R-RNO-2022377">
    <property type="pathway name" value="Metabolism of Angiotensinogen to Angiotensins"/>
</dbReference>
<dbReference type="Proteomes" id="UP000002494">
    <property type="component" value="Unplaced"/>
</dbReference>
<dbReference type="GO" id="GO:0005576">
    <property type="term" value="C:extracellular region"/>
    <property type="evidence" value="ECO:0000266"/>
    <property type="project" value="RGD"/>
</dbReference>
<dbReference type="GO" id="GO:0005615">
    <property type="term" value="C:extracellular space"/>
    <property type="evidence" value="ECO:0000318"/>
    <property type="project" value="GO_Central"/>
</dbReference>
<dbReference type="GO" id="GO:0030133">
    <property type="term" value="C:transport vesicle"/>
    <property type="evidence" value="ECO:0007669"/>
    <property type="project" value="UniProtKB-SubCell"/>
</dbReference>
<dbReference type="GO" id="GO:0004181">
    <property type="term" value="F:metallocarboxypeptidase activity"/>
    <property type="evidence" value="ECO:0000266"/>
    <property type="project" value="RGD"/>
</dbReference>
<dbReference type="GO" id="GO:0008233">
    <property type="term" value="F:peptidase activity"/>
    <property type="evidence" value="ECO:0000266"/>
    <property type="project" value="RGD"/>
</dbReference>
<dbReference type="GO" id="GO:0008270">
    <property type="term" value="F:zinc ion binding"/>
    <property type="evidence" value="ECO:0007669"/>
    <property type="project" value="InterPro"/>
</dbReference>
<dbReference type="GO" id="GO:0002003">
    <property type="term" value="P:angiotensin maturation"/>
    <property type="evidence" value="ECO:0000266"/>
    <property type="project" value="RGD"/>
</dbReference>
<dbReference type="GO" id="GO:0006508">
    <property type="term" value="P:proteolysis"/>
    <property type="evidence" value="ECO:0000318"/>
    <property type="project" value="GO_Central"/>
</dbReference>
<dbReference type="GO" id="GO:0002002">
    <property type="term" value="P:regulation of angiotensin levels in blood"/>
    <property type="evidence" value="ECO:0000266"/>
    <property type="project" value="RGD"/>
</dbReference>
<dbReference type="FunFam" id="3.30.70.340:FF:000002">
    <property type="entry name" value="Carboxypeptidase A"/>
    <property type="match status" value="1"/>
</dbReference>
<dbReference type="FunFam" id="3.40.630.10:FF:000001">
    <property type="entry name" value="Carboxypeptidase B"/>
    <property type="match status" value="1"/>
</dbReference>
<dbReference type="Gene3D" id="3.30.70.340">
    <property type="entry name" value="Metallocarboxypeptidase-like"/>
    <property type="match status" value="1"/>
</dbReference>
<dbReference type="Gene3D" id="3.40.630.10">
    <property type="entry name" value="Zn peptidases"/>
    <property type="match status" value="1"/>
</dbReference>
<dbReference type="InterPro" id="IPR036990">
    <property type="entry name" value="M14A-like_propep"/>
</dbReference>
<dbReference type="InterPro" id="IPR003146">
    <property type="entry name" value="M14A_act_pep"/>
</dbReference>
<dbReference type="InterPro" id="IPR000834">
    <property type="entry name" value="Peptidase_M14"/>
</dbReference>
<dbReference type="PANTHER" id="PTHR11705:SF65">
    <property type="entry name" value="MAST CELL CARBOXYPEPTIDASE A"/>
    <property type="match status" value="1"/>
</dbReference>
<dbReference type="PANTHER" id="PTHR11705">
    <property type="entry name" value="PROTEASE FAMILY M14 CARBOXYPEPTIDASE A,B"/>
    <property type="match status" value="1"/>
</dbReference>
<dbReference type="Pfam" id="PF00246">
    <property type="entry name" value="Peptidase_M14"/>
    <property type="match status" value="1"/>
</dbReference>
<dbReference type="Pfam" id="PF02244">
    <property type="entry name" value="Propep_M14"/>
    <property type="match status" value="1"/>
</dbReference>
<dbReference type="PRINTS" id="PR00765">
    <property type="entry name" value="CRBOXYPTASEA"/>
</dbReference>
<dbReference type="SMART" id="SM00631">
    <property type="entry name" value="Zn_pept"/>
    <property type="match status" value="1"/>
</dbReference>
<dbReference type="SUPFAM" id="SSF54897">
    <property type="entry name" value="Protease propeptides/inhibitors"/>
    <property type="match status" value="1"/>
</dbReference>
<dbReference type="SUPFAM" id="SSF53187">
    <property type="entry name" value="Zn-dependent exopeptidases"/>
    <property type="match status" value="1"/>
</dbReference>
<dbReference type="PROSITE" id="PS00132">
    <property type="entry name" value="CARBOXYPEPT_ZN_1"/>
    <property type="match status" value="1"/>
</dbReference>
<dbReference type="PROSITE" id="PS00133">
    <property type="entry name" value="CARBOXYPEPT_ZN_2"/>
    <property type="match status" value="1"/>
</dbReference>
<dbReference type="PROSITE" id="PS52035">
    <property type="entry name" value="PEPTIDASE_M14"/>
    <property type="match status" value="1"/>
</dbReference>
<keyword id="KW-0121">Carboxypeptidase</keyword>
<keyword id="KW-0968">Cytoplasmic vesicle</keyword>
<keyword id="KW-0903">Direct protein sequencing</keyword>
<keyword id="KW-1015">Disulfide bond</keyword>
<keyword id="KW-0378">Hydrolase</keyword>
<keyword id="KW-0479">Metal-binding</keyword>
<keyword id="KW-0482">Metalloprotease</keyword>
<keyword id="KW-0645">Protease</keyword>
<keyword id="KW-1185">Reference proteome</keyword>
<keyword id="KW-0732">Signal</keyword>
<keyword id="KW-0862">Zinc</keyword>
<keyword id="KW-0865">Zymogen</keyword>
<accession>P21961</accession>
<accession>P97597</accession>
<comment type="catalytic activity">
    <reaction>
        <text>Release of a C-terminal amino acid, but little or no action with -Asp, -Glu, -Arg, -Lys or -Pro.</text>
        <dbReference type="EC" id="3.4.17.1"/>
    </reaction>
</comment>
<comment type="cofactor">
    <cofactor evidence="2">
        <name>Zn(2+)</name>
        <dbReference type="ChEBI" id="CHEBI:29105"/>
    </cofactor>
    <text evidence="2">Binds 1 zinc ion per subunit.</text>
</comment>
<comment type="subcellular location">
    <subcellularLocation>
        <location>Cytoplasmic vesicle</location>
        <location>Secretory vesicle</location>
    </subcellularLocation>
    <text>Secretory granules.</text>
</comment>
<comment type="similarity">
    <text evidence="4">Belongs to the peptidase M14 family.</text>
</comment>
<proteinExistence type="evidence at protein level"/>
<organism>
    <name type="scientific">Rattus norvegicus</name>
    <name type="common">Rat</name>
    <dbReference type="NCBI Taxonomy" id="10116"/>
    <lineage>
        <taxon>Eukaryota</taxon>
        <taxon>Metazoa</taxon>
        <taxon>Chordata</taxon>
        <taxon>Craniata</taxon>
        <taxon>Vertebrata</taxon>
        <taxon>Euteleostomi</taxon>
        <taxon>Mammalia</taxon>
        <taxon>Eutheria</taxon>
        <taxon>Euarchontoglires</taxon>
        <taxon>Glires</taxon>
        <taxon>Rodentia</taxon>
        <taxon>Myomorpha</taxon>
        <taxon>Muroidea</taxon>
        <taxon>Muridae</taxon>
        <taxon>Murinae</taxon>
        <taxon>Rattus</taxon>
    </lineage>
</organism>
<protein>
    <recommendedName>
        <fullName>Mast cell carboxypeptidase A</fullName>
        <ecNumber>3.4.17.1</ecNumber>
    </recommendedName>
    <alternativeName>
        <fullName>Carboxypeptidase A3</fullName>
    </alternativeName>
    <alternativeName>
        <fullName>R-CPA</fullName>
    </alternativeName>
    <alternativeName>
        <fullName>RMC-CP</fullName>
    </alternativeName>
</protein>
<gene>
    <name type="primary">Cpa3</name>
</gene>
<name>CBPA3_RAT</name>